<comment type="function">
    <text evidence="2">Component of the sulfite reductase complex that catalyzes the 6-electron reduction of sulfite to sulfide. This is one of several activities required for the biosynthesis of L-cysteine from sulfate.</text>
</comment>
<comment type="catalytic activity">
    <reaction evidence="2">
        <text>hydrogen sulfide + 3 NADP(+) + 3 H2O = sulfite + 3 NADPH + 4 H(+)</text>
        <dbReference type="Rhea" id="RHEA:13801"/>
        <dbReference type="ChEBI" id="CHEBI:15377"/>
        <dbReference type="ChEBI" id="CHEBI:15378"/>
        <dbReference type="ChEBI" id="CHEBI:17359"/>
        <dbReference type="ChEBI" id="CHEBI:29919"/>
        <dbReference type="ChEBI" id="CHEBI:57783"/>
        <dbReference type="ChEBI" id="CHEBI:58349"/>
        <dbReference type="EC" id="1.8.1.2"/>
    </reaction>
</comment>
<comment type="cofactor">
    <cofactor evidence="2">
        <name>siroheme</name>
        <dbReference type="ChEBI" id="CHEBI:60052"/>
    </cofactor>
    <text evidence="2">Binds 1 siroheme per subunit.</text>
</comment>
<comment type="cofactor">
    <cofactor evidence="2">
        <name>[4Fe-4S] cluster</name>
        <dbReference type="ChEBI" id="CHEBI:49883"/>
    </cofactor>
    <text evidence="2">Binds 1 [4Fe-4S] cluster per subunit.</text>
</comment>
<comment type="pathway">
    <text evidence="2">Sulfur metabolism; hydrogen sulfide biosynthesis; hydrogen sulfide from sulfite (NADPH route): step 1/1.</text>
</comment>
<comment type="subunit">
    <text evidence="2">Alpha(8)-beta(8). The alpha component is a flavoprotein, the beta component is a hemoprotein.</text>
</comment>
<comment type="similarity">
    <text evidence="2">Belongs to the nitrite and sulfite reductase 4Fe-4S domain family.</text>
</comment>
<evidence type="ECO:0000250" key="1"/>
<evidence type="ECO:0000255" key="2">
    <source>
        <dbReference type="HAMAP-Rule" id="MF_01540"/>
    </source>
</evidence>
<name>CYSI_ECOL6</name>
<sequence length="570" mass="63978">MSEKHPGPLVVEGKLTDAERMKLESNYLRGTIAEDLNDGLTGGFKGDNFLLIRFHGMYQQDDRDIRAERAEQKLEPRHAMLLRCRLPGGVITTKQWQAIDKFAGENTIYGSIRLTNRQTFQFHGILKKNVKPVHQMLHSVGLDALATANDMNRNVLCTSNPYESQLHAEAYEWAKKISEHLLPRTRAYAEIWLDQEKVATTDEEPILGQTYLPRKFKTTVVIPPQNDIDLHANDMNFVAIAENGKLVGFNLLVGGGLSIEHGNKKTYARTASEFGYLPLEHTLAVAEAVVTTQRDWGNRTDRKNAKTKYTLERVGVETFKAEVERRAGIKFEPIRPYEFTGRGDRIGWVKGIDDNWHLTLFIENGRILDYPGRPLKTGLLEIAKIHKGDFRITANQNLIIAGVPESEKAKIEKIAKESGLMNAVTPQRENSMACVSFPTCPLAMAEAERFLPSFIDNIDNLMAKHGVSDEHIVMRVTGCPNGCGRAMLAEVGLVGKAPGRYNLHLGGNRMGTRIPRMYKENITEPEILASLDELIGRWAKEREAGEGFGDFTVRAGIIRPVLDPARDLWD</sequence>
<reference key="1">
    <citation type="journal article" date="2002" name="Proc. Natl. Acad. Sci. U.S.A.">
        <title>Extensive mosaic structure revealed by the complete genome sequence of uropathogenic Escherichia coli.</title>
        <authorList>
            <person name="Welch R.A."/>
            <person name="Burland V."/>
            <person name="Plunkett G. III"/>
            <person name="Redford P."/>
            <person name="Roesch P."/>
            <person name="Rasko D."/>
            <person name="Buckles E.L."/>
            <person name="Liou S.-R."/>
            <person name="Boutin A."/>
            <person name="Hackett J."/>
            <person name="Stroud D."/>
            <person name="Mayhew G.F."/>
            <person name="Rose D.J."/>
            <person name="Zhou S."/>
            <person name="Schwartz D.C."/>
            <person name="Perna N.T."/>
            <person name="Mobley H.L.T."/>
            <person name="Donnenberg M.S."/>
            <person name="Blattner F.R."/>
        </authorList>
    </citation>
    <scope>NUCLEOTIDE SEQUENCE [LARGE SCALE GENOMIC DNA]</scope>
    <source>
        <strain>CFT073 / ATCC 700928 / UPEC</strain>
    </source>
</reference>
<proteinExistence type="inferred from homology"/>
<feature type="initiator methionine" description="Removed" evidence="1">
    <location>
        <position position="1"/>
    </location>
</feature>
<feature type="chain" id="PRO_0000199898" description="Sulfite reductase [NADPH] hemoprotein beta-component">
    <location>
        <begin position="2"/>
        <end position="570"/>
    </location>
</feature>
<feature type="binding site" evidence="2">
    <location>
        <position position="434"/>
    </location>
    <ligand>
        <name>[4Fe-4S] cluster</name>
        <dbReference type="ChEBI" id="CHEBI:49883"/>
    </ligand>
</feature>
<feature type="binding site" evidence="2">
    <location>
        <position position="440"/>
    </location>
    <ligand>
        <name>[4Fe-4S] cluster</name>
        <dbReference type="ChEBI" id="CHEBI:49883"/>
    </ligand>
</feature>
<feature type="binding site" evidence="2">
    <location>
        <position position="479"/>
    </location>
    <ligand>
        <name>[4Fe-4S] cluster</name>
        <dbReference type="ChEBI" id="CHEBI:49883"/>
    </ligand>
</feature>
<feature type="binding site" evidence="2">
    <location>
        <position position="483"/>
    </location>
    <ligand>
        <name>[4Fe-4S] cluster</name>
        <dbReference type="ChEBI" id="CHEBI:49883"/>
    </ligand>
</feature>
<feature type="binding site" description="axial binding residue" evidence="2">
    <location>
        <position position="483"/>
    </location>
    <ligand>
        <name>siroheme</name>
        <dbReference type="ChEBI" id="CHEBI:60052"/>
    </ligand>
    <ligandPart>
        <name>Fe</name>
        <dbReference type="ChEBI" id="CHEBI:18248"/>
    </ligandPart>
</feature>
<protein>
    <recommendedName>
        <fullName evidence="2">Sulfite reductase [NADPH] hemoprotein beta-component</fullName>
        <shortName evidence="2">SiR-HP</shortName>
        <shortName evidence="2">SiRHP</shortName>
        <ecNumber evidence="2">1.8.1.2</ecNumber>
    </recommendedName>
</protein>
<accession>Q8FEI8</accession>
<organism>
    <name type="scientific">Escherichia coli O6:H1 (strain CFT073 / ATCC 700928 / UPEC)</name>
    <dbReference type="NCBI Taxonomy" id="199310"/>
    <lineage>
        <taxon>Bacteria</taxon>
        <taxon>Pseudomonadati</taxon>
        <taxon>Pseudomonadota</taxon>
        <taxon>Gammaproteobacteria</taxon>
        <taxon>Enterobacterales</taxon>
        <taxon>Enterobacteriaceae</taxon>
        <taxon>Escherichia</taxon>
    </lineage>
</organism>
<keyword id="KW-0004">4Fe-4S</keyword>
<keyword id="KW-0028">Amino-acid biosynthesis</keyword>
<keyword id="KW-0198">Cysteine biosynthesis</keyword>
<keyword id="KW-0349">Heme</keyword>
<keyword id="KW-0408">Iron</keyword>
<keyword id="KW-0411">Iron-sulfur</keyword>
<keyword id="KW-0479">Metal-binding</keyword>
<keyword id="KW-0521">NADP</keyword>
<keyword id="KW-0560">Oxidoreductase</keyword>
<keyword id="KW-1185">Reference proteome</keyword>
<dbReference type="EC" id="1.8.1.2" evidence="2"/>
<dbReference type="EMBL" id="AE014075">
    <property type="protein sequence ID" value="AAN81771.1"/>
    <property type="molecule type" value="Genomic_DNA"/>
</dbReference>
<dbReference type="RefSeq" id="WP_001290711.1">
    <property type="nucleotide sequence ID" value="NZ_CP051263.1"/>
</dbReference>
<dbReference type="SMR" id="Q8FEI8"/>
<dbReference type="STRING" id="199310.c3322"/>
<dbReference type="KEGG" id="ecc:c3322"/>
<dbReference type="eggNOG" id="COG0155">
    <property type="taxonomic scope" value="Bacteria"/>
</dbReference>
<dbReference type="HOGENOM" id="CLU_001975_3_2_6"/>
<dbReference type="BioCyc" id="ECOL199310:C3322-MONOMER"/>
<dbReference type="UniPathway" id="UPA00140">
    <property type="reaction ID" value="UER00207"/>
</dbReference>
<dbReference type="Proteomes" id="UP000001410">
    <property type="component" value="Chromosome"/>
</dbReference>
<dbReference type="GO" id="GO:0009337">
    <property type="term" value="C:sulfite reductase complex (NADPH)"/>
    <property type="evidence" value="ECO:0007669"/>
    <property type="project" value="InterPro"/>
</dbReference>
<dbReference type="GO" id="GO:0051539">
    <property type="term" value="F:4 iron, 4 sulfur cluster binding"/>
    <property type="evidence" value="ECO:0007669"/>
    <property type="project" value="UniProtKB-KW"/>
</dbReference>
<dbReference type="GO" id="GO:0020037">
    <property type="term" value="F:heme binding"/>
    <property type="evidence" value="ECO:0007669"/>
    <property type="project" value="InterPro"/>
</dbReference>
<dbReference type="GO" id="GO:0046872">
    <property type="term" value="F:metal ion binding"/>
    <property type="evidence" value="ECO:0007669"/>
    <property type="project" value="UniProtKB-KW"/>
</dbReference>
<dbReference type="GO" id="GO:0050661">
    <property type="term" value="F:NADP binding"/>
    <property type="evidence" value="ECO:0007669"/>
    <property type="project" value="InterPro"/>
</dbReference>
<dbReference type="GO" id="GO:0050311">
    <property type="term" value="F:sulfite reductase (ferredoxin) activity"/>
    <property type="evidence" value="ECO:0007669"/>
    <property type="project" value="TreeGrafter"/>
</dbReference>
<dbReference type="GO" id="GO:0004783">
    <property type="term" value="F:sulfite reductase (NADPH) activity"/>
    <property type="evidence" value="ECO:0007669"/>
    <property type="project" value="UniProtKB-UniRule"/>
</dbReference>
<dbReference type="GO" id="GO:0019344">
    <property type="term" value="P:cysteine biosynthetic process"/>
    <property type="evidence" value="ECO:0007669"/>
    <property type="project" value="UniProtKB-KW"/>
</dbReference>
<dbReference type="GO" id="GO:0070814">
    <property type="term" value="P:hydrogen sulfide biosynthetic process"/>
    <property type="evidence" value="ECO:0007669"/>
    <property type="project" value="UniProtKB-UniRule"/>
</dbReference>
<dbReference type="GO" id="GO:0000103">
    <property type="term" value="P:sulfate assimilation"/>
    <property type="evidence" value="ECO:0007669"/>
    <property type="project" value="UniProtKB-UniRule"/>
</dbReference>
<dbReference type="FunFam" id="3.30.413.10:FF:000003">
    <property type="entry name" value="Sulfite reductase [NADPH] hemoprotein beta-component"/>
    <property type="match status" value="1"/>
</dbReference>
<dbReference type="FunFam" id="3.30.413.10:FF:000004">
    <property type="entry name" value="Sulfite reductase [NADPH] hemoprotein beta-component"/>
    <property type="match status" value="1"/>
</dbReference>
<dbReference type="Gene3D" id="3.30.413.10">
    <property type="entry name" value="Sulfite Reductase Hemoprotein, domain 1"/>
    <property type="match status" value="2"/>
</dbReference>
<dbReference type="HAMAP" id="MF_01540">
    <property type="entry name" value="CysI"/>
    <property type="match status" value="1"/>
</dbReference>
<dbReference type="InterPro" id="IPR011786">
    <property type="entry name" value="CysI"/>
</dbReference>
<dbReference type="InterPro" id="IPR005117">
    <property type="entry name" value="NiRdtase/SiRdtase_haem-b_fer"/>
</dbReference>
<dbReference type="InterPro" id="IPR036136">
    <property type="entry name" value="Nit/Sulf_reduc_fer-like_dom_sf"/>
</dbReference>
<dbReference type="InterPro" id="IPR006067">
    <property type="entry name" value="NO2/SO3_Rdtase_4Fe4S_dom"/>
</dbReference>
<dbReference type="InterPro" id="IPR045169">
    <property type="entry name" value="NO2/SO3_Rdtase_4Fe4S_prot"/>
</dbReference>
<dbReference type="InterPro" id="IPR045854">
    <property type="entry name" value="NO2/SO3_Rdtase_4Fe4S_sf"/>
</dbReference>
<dbReference type="InterPro" id="IPR006066">
    <property type="entry name" value="NO2/SO3_Rdtase_FeS/sirohaem_BS"/>
</dbReference>
<dbReference type="NCBIfam" id="TIGR02041">
    <property type="entry name" value="CysI"/>
    <property type="match status" value="1"/>
</dbReference>
<dbReference type="NCBIfam" id="NF010029">
    <property type="entry name" value="PRK13504.1"/>
    <property type="match status" value="1"/>
</dbReference>
<dbReference type="PANTHER" id="PTHR11493:SF47">
    <property type="entry name" value="SULFITE REDUCTASE [NADPH] SUBUNIT BETA"/>
    <property type="match status" value="1"/>
</dbReference>
<dbReference type="PANTHER" id="PTHR11493">
    <property type="entry name" value="SULFITE REDUCTASE [NADPH] SUBUNIT BETA-RELATED"/>
    <property type="match status" value="1"/>
</dbReference>
<dbReference type="Pfam" id="PF01077">
    <property type="entry name" value="NIR_SIR"/>
    <property type="match status" value="1"/>
</dbReference>
<dbReference type="Pfam" id="PF03460">
    <property type="entry name" value="NIR_SIR_ferr"/>
    <property type="match status" value="2"/>
</dbReference>
<dbReference type="PRINTS" id="PR00397">
    <property type="entry name" value="SIROHAEM"/>
</dbReference>
<dbReference type="SUPFAM" id="SSF56014">
    <property type="entry name" value="Nitrite and sulphite reductase 4Fe-4S domain-like"/>
    <property type="match status" value="2"/>
</dbReference>
<dbReference type="SUPFAM" id="SSF55124">
    <property type="entry name" value="Nitrite/Sulfite reductase N-terminal domain-like"/>
    <property type="match status" value="2"/>
</dbReference>
<dbReference type="PROSITE" id="PS00365">
    <property type="entry name" value="NIR_SIR"/>
    <property type="match status" value="1"/>
</dbReference>
<gene>
    <name evidence="2" type="primary">cysI</name>
    <name type="ordered locus">c3322</name>
</gene>